<name>MSR21_ORYSJ</name>
<feature type="chain" id="PRO_0000395515" description="Peptide methionine sulfoxide reductase A2-1">
    <location>
        <begin position="1"/>
        <end position="187"/>
    </location>
</feature>
<evidence type="ECO:0000250" key="1"/>
<evidence type="ECO:0000305" key="2"/>
<reference key="1">
    <citation type="journal article" date="2002" name="Nature">
        <title>Sequence and analysis of rice chromosome 4.</title>
        <authorList>
            <person name="Feng Q."/>
            <person name="Zhang Y."/>
            <person name="Hao P."/>
            <person name="Wang S."/>
            <person name="Fu G."/>
            <person name="Huang Y."/>
            <person name="Li Y."/>
            <person name="Zhu J."/>
            <person name="Liu Y."/>
            <person name="Hu X."/>
            <person name="Jia P."/>
            <person name="Zhang Y."/>
            <person name="Zhao Q."/>
            <person name="Ying K."/>
            <person name="Yu S."/>
            <person name="Tang Y."/>
            <person name="Weng Q."/>
            <person name="Zhang L."/>
            <person name="Lu Y."/>
            <person name="Mu J."/>
            <person name="Lu Y."/>
            <person name="Zhang L.S."/>
            <person name="Yu Z."/>
            <person name="Fan D."/>
            <person name="Liu X."/>
            <person name="Lu T."/>
            <person name="Li C."/>
            <person name="Wu Y."/>
            <person name="Sun T."/>
            <person name="Lei H."/>
            <person name="Li T."/>
            <person name="Hu H."/>
            <person name="Guan J."/>
            <person name="Wu M."/>
            <person name="Zhang R."/>
            <person name="Zhou B."/>
            <person name="Chen Z."/>
            <person name="Chen L."/>
            <person name="Jin Z."/>
            <person name="Wang R."/>
            <person name="Yin H."/>
            <person name="Cai Z."/>
            <person name="Ren S."/>
            <person name="Lv G."/>
            <person name="Gu W."/>
            <person name="Zhu G."/>
            <person name="Tu Y."/>
            <person name="Jia J."/>
            <person name="Zhang Y."/>
            <person name="Chen J."/>
            <person name="Kang H."/>
            <person name="Chen X."/>
            <person name="Shao C."/>
            <person name="Sun Y."/>
            <person name="Hu Q."/>
            <person name="Zhang X."/>
            <person name="Zhang W."/>
            <person name="Wang L."/>
            <person name="Ding C."/>
            <person name="Sheng H."/>
            <person name="Gu J."/>
            <person name="Chen S."/>
            <person name="Ni L."/>
            <person name="Zhu F."/>
            <person name="Chen W."/>
            <person name="Lan L."/>
            <person name="Lai Y."/>
            <person name="Cheng Z."/>
            <person name="Gu M."/>
            <person name="Jiang J."/>
            <person name="Li J."/>
            <person name="Hong G."/>
            <person name="Xue Y."/>
            <person name="Han B."/>
        </authorList>
    </citation>
    <scope>NUCLEOTIDE SEQUENCE [LARGE SCALE GENOMIC DNA]</scope>
    <source>
        <strain>cv. Nipponbare</strain>
    </source>
</reference>
<reference key="2">
    <citation type="journal article" date="2005" name="Nature">
        <title>The map-based sequence of the rice genome.</title>
        <authorList>
            <consortium name="International rice genome sequencing project (IRGSP)"/>
        </authorList>
    </citation>
    <scope>NUCLEOTIDE SEQUENCE [LARGE SCALE GENOMIC DNA]</scope>
    <source>
        <strain>cv. Nipponbare</strain>
    </source>
</reference>
<reference key="3">
    <citation type="journal article" date="2008" name="Nucleic Acids Res.">
        <title>The rice annotation project database (RAP-DB): 2008 update.</title>
        <authorList>
            <consortium name="The rice annotation project (RAP)"/>
        </authorList>
    </citation>
    <scope>GENOME REANNOTATION</scope>
    <source>
        <strain>cv. Nipponbare</strain>
    </source>
</reference>
<reference key="4">
    <citation type="journal article" date="2013" name="Rice">
        <title>Improvement of the Oryza sativa Nipponbare reference genome using next generation sequence and optical map data.</title>
        <authorList>
            <person name="Kawahara Y."/>
            <person name="de la Bastide M."/>
            <person name="Hamilton J.P."/>
            <person name="Kanamori H."/>
            <person name="McCombie W.R."/>
            <person name="Ouyang S."/>
            <person name="Schwartz D.C."/>
            <person name="Tanaka T."/>
            <person name="Wu J."/>
            <person name="Zhou S."/>
            <person name="Childs K.L."/>
            <person name="Davidson R.M."/>
            <person name="Lin H."/>
            <person name="Quesada-Ocampo L."/>
            <person name="Vaillancourt B."/>
            <person name="Sakai H."/>
            <person name="Lee S.S."/>
            <person name="Kim J."/>
            <person name="Numa H."/>
            <person name="Itoh T."/>
            <person name="Buell C.R."/>
            <person name="Matsumoto T."/>
        </authorList>
    </citation>
    <scope>GENOME REANNOTATION</scope>
    <source>
        <strain>cv. Nipponbare</strain>
    </source>
</reference>
<reference key="5">
    <citation type="journal article" date="2005" name="PLoS Biol.">
        <title>The genomes of Oryza sativa: a history of duplications.</title>
        <authorList>
            <person name="Yu J."/>
            <person name="Wang J."/>
            <person name="Lin W."/>
            <person name="Li S."/>
            <person name="Li H."/>
            <person name="Zhou J."/>
            <person name="Ni P."/>
            <person name="Dong W."/>
            <person name="Hu S."/>
            <person name="Zeng C."/>
            <person name="Zhang J."/>
            <person name="Zhang Y."/>
            <person name="Li R."/>
            <person name="Xu Z."/>
            <person name="Li S."/>
            <person name="Li X."/>
            <person name="Zheng H."/>
            <person name="Cong L."/>
            <person name="Lin L."/>
            <person name="Yin J."/>
            <person name="Geng J."/>
            <person name="Li G."/>
            <person name="Shi J."/>
            <person name="Liu J."/>
            <person name="Lv H."/>
            <person name="Li J."/>
            <person name="Wang J."/>
            <person name="Deng Y."/>
            <person name="Ran L."/>
            <person name="Shi X."/>
            <person name="Wang X."/>
            <person name="Wu Q."/>
            <person name="Li C."/>
            <person name="Ren X."/>
            <person name="Wang J."/>
            <person name="Wang X."/>
            <person name="Li D."/>
            <person name="Liu D."/>
            <person name="Zhang X."/>
            <person name="Ji Z."/>
            <person name="Zhao W."/>
            <person name="Sun Y."/>
            <person name="Zhang Z."/>
            <person name="Bao J."/>
            <person name="Han Y."/>
            <person name="Dong L."/>
            <person name="Ji J."/>
            <person name="Chen P."/>
            <person name="Wu S."/>
            <person name="Liu J."/>
            <person name="Xiao Y."/>
            <person name="Bu D."/>
            <person name="Tan J."/>
            <person name="Yang L."/>
            <person name="Ye C."/>
            <person name="Zhang J."/>
            <person name="Xu J."/>
            <person name="Zhou Y."/>
            <person name="Yu Y."/>
            <person name="Zhang B."/>
            <person name="Zhuang S."/>
            <person name="Wei H."/>
            <person name="Liu B."/>
            <person name="Lei M."/>
            <person name="Yu H."/>
            <person name="Li Y."/>
            <person name="Xu H."/>
            <person name="Wei S."/>
            <person name="He X."/>
            <person name="Fang L."/>
            <person name="Zhang Z."/>
            <person name="Zhang Y."/>
            <person name="Huang X."/>
            <person name="Su Z."/>
            <person name="Tong W."/>
            <person name="Li J."/>
            <person name="Tong Z."/>
            <person name="Li S."/>
            <person name="Ye J."/>
            <person name="Wang L."/>
            <person name="Fang L."/>
            <person name="Lei T."/>
            <person name="Chen C.-S."/>
            <person name="Chen H.-C."/>
            <person name="Xu Z."/>
            <person name="Li H."/>
            <person name="Huang H."/>
            <person name="Zhang F."/>
            <person name="Xu H."/>
            <person name="Li N."/>
            <person name="Zhao C."/>
            <person name="Li S."/>
            <person name="Dong L."/>
            <person name="Huang Y."/>
            <person name="Li L."/>
            <person name="Xi Y."/>
            <person name="Qi Q."/>
            <person name="Li W."/>
            <person name="Zhang B."/>
            <person name="Hu W."/>
            <person name="Zhang Y."/>
            <person name="Tian X."/>
            <person name="Jiao Y."/>
            <person name="Liang X."/>
            <person name="Jin J."/>
            <person name="Gao L."/>
            <person name="Zheng W."/>
            <person name="Hao B."/>
            <person name="Liu S.-M."/>
            <person name="Wang W."/>
            <person name="Yuan L."/>
            <person name="Cao M."/>
            <person name="McDermott J."/>
            <person name="Samudrala R."/>
            <person name="Wang J."/>
            <person name="Wong G.K.-S."/>
            <person name="Yang H."/>
        </authorList>
    </citation>
    <scope>NUCLEOTIDE SEQUENCE [LARGE SCALE GENOMIC DNA]</scope>
    <source>
        <strain>cv. Nipponbare</strain>
    </source>
</reference>
<reference key="6">
    <citation type="journal article" date="2003" name="Science">
        <title>Collection, mapping, and annotation of over 28,000 cDNA clones from japonica rice.</title>
        <authorList>
            <consortium name="The rice full-length cDNA consortium"/>
        </authorList>
    </citation>
    <scope>NUCLEOTIDE SEQUENCE [LARGE SCALE MRNA]</scope>
    <source>
        <strain>cv. Nipponbare</strain>
    </source>
</reference>
<reference key="7">
    <citation type="journal article" date="2006" name="Photosyn. Res.">
        <title>Plant methionine sulfoxide reductase A and B multigenic families.</title>
        <authorList>
            <person name="Rouhier N."/>
            <person name="Vieira Dos Santos C."/>
            <person name="Tarrago L."/>
            <person name="Rey P."/>
        </authorList>
    </citation>
    <scope>GENE FAMILY</scope>
    <scope>NOMENCLATURE</scope>
</reference>
<comment type="function">
    <text evidence="1">Catalyzes the reduction of methionine sulfoxide (MetSO) to methionine in proteins. Plays a protective role against oxidative stress by restoring activity to proteins that have been inactivated by methionine oxidation. MSRA family specifically reduces the MetSO S-enantiomer (By similarity).</text>
</comment>
<comment type="catalytic activity">
    <reaction>
        <text>L-methionyl-[protein] + [thioredoxin]-disulfide + H2O = L-methionyl-(S)-S-oxide-[protein] + [thioredoxin]-dithiol</text>
        <dbReference type="Rhea" id="RHEA:14217"/>
        <dbReference type="Rhea" id="RHEA-COMP:10698"/>
        <dbReference type="Rhea" id="RHEA-COMP:10700"/>
        <dbReference type="Rhea" id="RHEA-COMP:12313"/>
        <dbReference type="Rhea" id="RHEA-COMP:12315"/>
        <dbReference type="ChEBI" id="CHEBI:15377"/>
        <dbReference type="ChEBI" id="CHEBI:16044"/>
        <dbReference type="ChEBI" id="CHEBI:29950"/>
        <dbReference type="ChEBI" id="CHEBI:44120"/>
        <dbReference type="ChEBI" id="CHEBI:50058"/>
        <dbReference type="EC" id="1.8.4.11"/>
    </reaction>
</comment>
<comment type="catalytic activity">
    <reaction>
        <text>[thioredoxin]-disulfide + L-methionine + H2O = L-methionine (S)-S-oxide + [thioredoxin]-dithiol</text>
        <dbReference type="Rhea" id="RHEA:19993"/>
        <dbReference type="Rhea" id="RHEA-COMP:10698"/>
        <dbReference type="Rhea" id="RHEA-COMP:10700"/>
        <dbReference type="ChEBI" id="CHEBI:15377"/>
        <dbReference type="ChEBI" id="CHEBI:29950"/>
        <dbReference type="ChEBI" id="CHEBI:50058"/>
        <dbReference type="ChEBI" id="CHEBI:57844"/>
        <dbReference type="ChEBI" id="CHEBI:58772"/>
        <dbReference type="EC" id="1.8.4.11"/>
    </reaction>
</comment>
<comment type="subcellular location">
    <subcellularLocation>
        <location evidence="2">Cytoplasm</location>
        <location evidence="2">Cytosol</location>
    </subcellularLocation>
</comment>
<comment type="similarity">
    <text evidence="2">Belongs to the MsrA Met sulfoxide reductase family.</text>
</comment>
<organism>
    <name type="scientific">Oryza sativa subsp. japonica</name>
    <name type="common">Rice</name>
    <dbReference type="NCBI Taxonomy" id="39947"/>
    <lineage>
        <taxon>Eukaryota</taxon>
        <taxon>Viridiplantae</taxon>
        <taxon>Streptophyta</taxon>
        <taxon>Embryophyta</taxon>
        <taxon>Tracheophyta</taxon>
        <taxon>Spermatophyta</taxon>
        <taxon>Magnoliopsida</taxon>
        <taxon>Liliopsida</taxon>
        <taxon>Poales</taxon>
        <taxon>Poaceae</taxon>
        <taxon>BOP clade</taxon>
        <taxon>Oryzoideae</taxon>
        <taxon>Oryzeae</taxon>
        <taxon>Oryzinae</taxon>
        <taxon>Oryza</taxon>
        <taxon>Oryza sativa</taxon>
    </lineage>
</organism>
<keyword id="KW-0963">Cytoplasm</keyword>
<keyword id="KW-0560">Oxidoreductase</keyword>
<keyword id="KW-1185">Reference proteome</keyword>
<dbReference type="EC" id="1.8.4.11"/>
<dbReference type="EMBL" id="AL606614">
    <property type="protein sequence ID" value="CAD41099.2"/>
    <property type="molecule type" value="Genomic_DNA"/>
</dbReference>
<dbReference type="EMBL" id="AP008210">
    <property type="protein sequence ID" value="BAF15030.1"/>
    <property type="molecule type" value="Genomic_DNA"/>
</dbReference>
<dbReference type="EMBL" id="AP014960">
    <property type="protein sequence ID" value="BAS89754.1"/>
    <property type="molecule type" value="Genomic_DNA"/>
</dbReference>
<dbReference type="EMBL" id="CM000141">
    <property type="protein sequence ID" value="EAZ31123.1"/>
    <property type="molecule type" value="Genomic_DNA"/>
</dbReference>
<dbReference type="EMBL" id="AK064801">
    <property type="protein sequence ID" value="BAG89211.1"/>
    <property type="molecule type" value="mRNA"/>
</dbReference>
<dbReference type="RefSeq" id="XP_015637285.1">
    <property type="nucleotide sequence ID" value="XM_015781799.1"/>
</dbReference>
<dbReference type="SMR" id="Q7XUP7"/>
<dbReference type="FunCoup" id="Q7XUP7">
    <property type="interactions" value="1547"/>
</dbReference>
<dbReference type="STRING" id="39947.Q7XUP7"/>
<dbReference type="PaxDb" id="39947-Q7XUP7"/>
<dbReference type="EnsemblPlants" id="Os04t0482000-01">
    <property type="protein sequence ID" value="Os04t0482000-01"/>
    <property type="gene ID" value="Os04g0482000"/>
</dbReference>
<dbReference type="Gramene" id="Os04t0482000-01">
    <property type="protein sequence ID" value="Os04t0482000-01"/>
    <property type="gene ID" value="Os04g0482000"/>
</dbReference>
<dbReference type="KEGG" id="dosa:Os04g0482000"/>
<dbReference type="eggNOG" id="KOG1635">
    <property type="taxonomic scope" value="Eukaryota"/>
</dbReference>
<dbReference type="HOGENOM" id="CLU_031040_10_2_1"/>
<dbReference type="InParanoid" id="Q7XUP7"/>
<dbReference type="OMA" id="FWCLEHD"/>
<dbReference type="OrthoDB" id="77405at2759"/>
<dbReference type="Proteomes" id="UP000000763">
    <property type="component" value="Chromosome 4"/>
</dbReference>
<dbReference type="Proteomes" id="UP000007752">
    <property type="component" value="Chromosome 4"/>
</dbReference>
<dbReference type="Proteomes" id="UP000059680">
    <property type="component" value="Chromosome 4"/>
</dbReference>
<dbReference type="GO" id="GO:0005737">
    <property type="term" value="C:cytoplasm"/>
    <property type="evidence" value="ECO:0000318"/>
    <property type="project" value="GO_Central"/>
</dbReference>
<dbReference type="GO" id="GO:0005829">
    <property type="term" value="C:cytosol"/>
    <property type="evidence" value="ECO:0007669"/>
    <property type="project" value="UniProtKB-SubCell"/>
</dbReference>
<dbReference type="GO" id="GO:0036456">
    <property type="term" value="F:L-methionine-(S)-S-oxide reductase activity"/>
    <property type="evidence" value="ECO:0000318"/>
    <property type="project" value="GO_Central"/>
</dbReference>
<dbReference type="GO" id="GO:0008113">
    <property type="term" value="F:peptide-methionine (S)-S-oxide reductase activity"/>
    <property type="evidence" value="ECO:0000318"/>
    <property type="project" value="GO_Central"/>
</dbReference>
<dbReference type="GO" id="GO:0034599">
    <property type="term" value="P:cellular response to oxidative stress"/>
    <property type="evidence" value="ECO:0000318"/>
    <property type="project" value="GO_Central"/>
</dbReference>
<dbReference type="FunFam" id="3.30.1060.10:FF:000002">
    <property type="entry name" value="Peptide methionine sulfoxide reductase"/>
    <property type="match status" value="1"/>
</dbReference>
<dbReference type="Gene3D" id="3.30.1060.10">
    <property type="entry name" value="Peptide methionine sulphoxide reductase MsrA"/>
    <property type="match status" value="1"/>
</dbReference>
<dbReference type="HAMAP" id="MF_01401">
    <property type="entry name" value="MsrA"/>
    <property type="match status" value="1"/>
</dbReference>
<dbReference type="InterPro" id="IPR002569">
    <property type="entry name" value="Met_Sox_Rdtase_MsrA_dom"/>
</dbReference>
<dbReference type="InterPro" id="IPR036509">
    <property type="entry name" value="Met_Sox_Rdtase_MsrA_sf"/>
</dbReference>
<dbReference type="InterPro" id="IPR050162">
    <property type="entry name" value="MsrA_MetSO_reductase"/>
</dbReference>
<dbReference type="NCBIfam" id="TIGR00401">
    <property type="entry name" value="msrA"/>
    <property type="match status" value="1"/>
</dbReference>
<dbReference type="PANTHER" id="PTHR42799">
    <property type="entry name" value="MITOCHONDRIAL PEPTIDE METHIONINE SULFOXIDE REDUCTASE"/>
    <property type="match status" value="1"/>
</dbReference>
<dbReference type="PANTHER" id="PTHR42799:SF8">
    <property type="entry name" value="PEPTIDE METHIONINE SULFOXIDE REDUCTASE A2-2"/>
    <property type="match status" value="1"/>
</dbReference>
<dbReference type="Pfam" id="PF01625">
    <property type="entry name" value="PMSR"/>
    <property type="match status" value="1"/>
</dbReference>
<dbReference type="SUPFAM" id="SSF55068">
    <property type="entry name" value="Peptide methionine sulfoxide reductase"/>
    <property type="match status" value="1"/>
</dbReference>
<sequence length="187" mass="20807">MSDSNPGAANPALGPDADAAAGEGLELAQFAAGCFWSVELTYQRLPGVARTEVGYSQGHRHEPTYRDVCGGGTGHAEVVRVHYDPKACPYEVLLDVFWAKHNPTTLNRQGNDVGTQYRSGIYYYTAEQEKAARDSLAEKQKEWKERIVTEILPATRFYPAEEYHQRYLEKGGQSAKKSCNDPIRCYG</sequence>
<gene>
    <name type="primary">MSRA2-1</name>
    <name type="ordered locus">Os04g0482000</name>
    <name type="ordered locus">LOC_Os04g40600</name>
    <name type="ORF">OsJ_15220</name>
    <name type="ORF">OSJNBb0011N17.16</name>
</gene>
<proteinExistence type="evidence at transcript level"/>
<protein>
    <recommendedName>
        <fullName>Peptide methionine sulfoxide reductase A2-1</fullName>
        <shortName>OsMSRA2.1</shortName>
        <ecNumber>1.8.4.11</ecNumber>
    </recommendedName>
    <alternativeName>
        <fullName>Peptide-methionine (S)-S-oxide reductase</fullName>
        <shortName>Peptide Met(O) reductase</shortName>
    </alternativeName>
    <alternativeName>
        <fullName>Protein-methionine-S-oxide reductase</fullName>
    </alternativeName>
</protein>
<accession>Q7XUP7</accession>
<accession>A0A0P0WBW6</accession>